<accession>P53486</accession>
<name>ACTB3_TAKRU</name>
<comment type="function">
    <text evidence="3">Actin is a highly conserved protein that polymerizes to produce filaments that form cross-linked networks in the cytoplasm of cells. Actin exists in both monomeric (G-actin) and polymeric (F-actin) forms, both forms playing key functions, such as cell motility and contraction. In addition to their role in the cytoplasmic cytoskeleton, G- and F-actin also localize in the nucleus, and regulate gene transcription and motility and repair of damaged DNA.</text>
</comment>
<comment type="catalytic activity">
    <reaction evidence="5">
        <text>ATP + H2O = ADP + phosphate + H(+)</text>
        <dbReference type="Rhea" id="RHEA:13065"/>
        <dbReference type="ChEBI" id="CHEBI:15377"/>
        <dbReference type="ChEBI" id="CHEBI:15378"/>
        <dbReference type="ChEBI" id="CHEBI:30616"/>
        <dbReference type="ChEBI" id="CHEBI:43474"/>
        <dbReference type="ChEBI" id="CHEBI:456216"/>
    </reaction>
</comment>
<comment type="subunit">
    <text evidence="3 4">Polymerization of globular actin (G-actin) leads to a structural filament (F-actin) in the form of a two-stranded helix (By similarity). Each actin can bind to 4 others (By similarity).</text>
</comment>
<comment type="subcellular location">
    <subcellularLocation>
        <location evidence="4">Cytoplasm</location>
        <location evidence="4">Cytoskeleton</location>
    </subcellularLocation>
    <subcellularLocation>
        <location evidence="1">Nucleus</location>
    </subcellularLocation>
</comment>
<comment type="tissue specificity">
    <text evidence="6">Predominantly expressed in gills, kidney and skin.</text>
</comment>
<comment type="PTM">
    <molecule>Actin, cytoplasmic 3</molecule>
    <text evidence="3">N-terminal cleavage of acetylated methionine of immature cytoplasmic actin by ACTMAP.</text>
</comment>
<comment type="PTM">
    <text evidence="4">Oxidation of Met-44 and Met-47 by MICALs (mical1, mical2 or mical3) to form methionine sulfoxide promotes actin filament depolymerization. Mical1 and mical2 produce the (R)-S-oxide form. The (R)-S-oxide form is reverted by msrb1 and msrb2, which promote actin repolymerization.</text>
</comment>
<comment type="PTM">
    <text evidence="2">Methylation at His-73 by SETD3. Methylation stabilizes actin filaments.</text>
</comment>
<comment type="miscellaneous">
    <text evidence="7">There are three different beta-cytoplasmic actins in Fugu rubripes.</text>
</comment>
<comment type="miscellaneous">
    <text evidence="1">In vertebrates 3 main groups of actin isoforms, alpha, beta and gamma have been identified. The alpha actins are found in muscle tissues and are a major constituent of the contractile apparatus. The beta and gamma actins coexist in most cell types as components of the cytoskeleton and as mediators of internal cell motility.</text>
</comment>
<comment type="similarity">
    <text evidence="7">Belongs to the actin family.</text>
</comment>
<reference key="1">
    <citation type="journal article" date="1996" name="J. Mol. Biol.">
        <title>Isolation, characterization and evolution of nine pufferfish (Fugu rubripes) actin genes.</title>
        <authorList>
            <person name="Venkatesh B."/>
            <person name="Tay B.H."/>
            <person name="Elgar G."/>
            <person name="Brenner S."/>
        </authorList>
    </citation>
    <scope>NUCLEOTIDE SEQUENCE [GENOMIC DNA]</scope>
    <scope>TISSUE SPECIFICITY</scope>
</reference>
<proteinExistence type="evidence at transcript level"/>
<evidence type="ECO:0000250" key="1">
    <source>
        <dbReference type="UniProtKB" id="O93400"/>
    </source>
</evidence>
<evidence type="ECO:0000250" key="2">
    <source>
        <dbReference type="UniProtKB" id="P60706"/>
    </source>
</evidence>
<evidence type="ECO:0000250" key="3">
    <source>
        <dbReference type="UniProtKB" id="P60709"/>
    </source>
</evidence>
<evidence type="ECO:0000250" key="4">
    <source>
        <dbReference type="UniProtKB" id="P60710"/>
    </source>
</evidence>
<evidence type="ECO:0000250" key="5">
    <source>
        <dbReference type="UniProtKB" id="P68137"/>
    </source>
</evidence>
<evidence type="ECO:0000269" key="6">
    <source>
    </source>
</evidence>
<evidence type="ECO:0000305" key="7"/>
<gene>
    <name type="primary">actbc</name>
</gene>
<feature type="chain" id="PRO_0000367096" description="Actin, cytoplasmic 3">
    <location>
        <begin position="1"/>
        <end position="375"/>
    </location>
</feature>
<feature type="initiator methionine" description="Removed; alternate" evidence="2">
    <location>
        <position position="1"/>
    </location>
</feature>
<feature type="chain" id="PRO_0000000841" description="Actin, cytoplasmic 3, N-terminally processed">
    <location>
        <begin position="2"/>
        <end position="375"/>
    </location>
</feature>
<feature type="modified residue" description="N-acetylmethionine; in Actin, cytoplasmic 3; alternate" evidence="2">
    <location>
        <position position="1"/>
    </location>
</feature>
<feature type="modified residue" description="N-acetylglutamate; in Actin, cytoplasmic 3, N-terminally processed" evidence="2">
    <location>
        <position position="2"/>
    </location>
</feature>
<feature type="modified residue" description="Methionine (R)-sulfoxide" evidence="4">
    <location>
        <position position="44"/>
    </location>
</feature>
<feature type="modified residue" description="Methionine (R)-sulfoxide" evidence="4">
    <location>
        <position position="47"/>
    </location>
</feature>
<feature type="modified residue" description="Tele-methylhistidine" evidence="4">
    <location>
        <position position="73"/>
    </location>
</feature>
<sequence length="375" mass="41783">MEDEVASLVVDNGSGMCKAGFAGDDAPRAVFPSIVGRPRHQGVMVGMGQKDSYVGDEAQSKRGILTLKYPIEHGIVTNWDDMEKIWHHTFYNELRVAPEEHPVLLTEAPLNPKANREKMTQIMFETFNTPAMYVAIQAVLSLYASGRTTGIVMDSGDGVTHTVPIYEGYALPHAILRLDLAGRDLTDYLMKILTERGYSFTTTAEREIVRDIKEKLCYVALDFEQEMATASSSSSLEKSYELPDGQVITIGNERFRCPEALFQPSFLGMESSGIHETTYNSIMKCDVDIRKDLYANTVLSGGTTMYPGIADRMQKEITALAPSTMKIKIIAPPERKYSVWIGGSILASLSTFQQMWISKQEYDESGPSIVHRKCF</sequence>
<dbReference type="EC" id="3.6.4.-" evidence="5"/>
<dbReference type="EMBL" id="U38849">
    <property type="protein sequence ID" value="AAC59891.1"/>
    <property type="molecule type" value="Genomic_DNA"/>
</dbReference>
<dbReference type="PIR" id="S71126">
    <property type="entry name" value="S71126"/>
</dbReference>
<dbReference type="SMR" id="P53486"/>
<dbReference type="STRING" id="31033.ENSTRUP00000086165"/>
<dbReference type="Ensembl" id="ENSTRUT00000069518.1">
    <property type="protein sequence ID" value="ENSTRUP00000059291.1"/>
    <property type="gene ID" value="ENSTRUG00000004099.3"/>
</dbReference>
<dbReference type="GeneTree" id="ENSGT00950000182960"/>
<dbReference type="InParanoid" id="P53486"/>
<dbReference type="OMA" id="WISNEEY"/>
<dbReference type="OrthoDB" id="6953074at2759"/>
<dbReference type="Proteomes" id="UP000005226">
    <property type="component" value="Chromosome 21"/>
</dbReference>
<dbReference type="GO" id="GO:0005737">
    <property type="term" value="C:cytoplasm"/>
    <property type="evidence" value="ECO:0007669"/>
    <property type="project" value="UniProtKB-KW"/>
</dbReference>
<dbReference type="GO" id="GO:0005856">
    <property type="term" value="C:cytoskeleton"/>
    <property type="evidence" value="ECO:0007669"/>
    <property type="project" value="UniProtKB-SubCell"/>
</dbReference>
<dbReference type="GO" id="GO:0005634">
    <property type="term" value="C:nucleus"/>
    <property type="evidence" value="ECO:0007669"/>
    <property type="project" value="UniProtKB-SubCell"/>
</dbReference>
<dbReference type="GO" id="GO:0005524">
    <property type="term" value="F:ATP binding"/>
    <property type="evidence" value="ECO:0007669"/>
    <property type="project" value="UniProtKB-KW"/>
</dbReference>
<dbReference type="GO" id="GO:0016787">
    <property type="term" value="F:hydrolase activity"/>
    <property type="evidence" value="ECO:0007669"/>
    <property type="project" value="UniProtKB-KW"/>
</dbReference>
<dbReference type="CDD" id="cd10224">
    <property type="entry name" value="ASKHA_NBD_actin"/>
    <property type="match status" value="1"/>
</dbReference>
<dbReference type="FunFam" id="3.30.420.40:FF:000131">
    <property type="entry name" value="Actin, alpha skeletal muscle"/>
    <property type="match status" value="1"/>
</dbReference>
<dbReference type="FunFam" id="3.30.420.40:FF:000291">
    <property type="entry name" value="Actin, alpha skeletal muscle"/>
    <property type="match status" value="1"/>
</dbReference>
<dbReference type="FunFam" id="3.90.640.10:FF:000047">
    <property type="entry name" value="Actin, alpha skeletal muscle"/>
    <property type="match status" value="1"/>
</dbReference>
<dbReference type="FunFam" id="3.30.420.40:FF:000058">
    <property type="entry name" value="Putative actin-related protein 5"/>
    <property type="match status" value="1"/>
</dbReference>
<dbReference type="Gene3D" id="3.30.420.40">
    <property type="match status" value="2"/>
</dbReference>
<dbReference type="Gene3D" id="3.90.640.10">
    <property type="entry name" value="Actin, Chain A, domain 4"/>
    <property type="match status" value="1"/>
</dbReference>
<dbReference type="InterPro" id="IPR004000">
    <property type="entry name" value="Actin"/>
</dbReference>
<dbReference type="InterPro" id="IPR020902">
    <property type="entry name" value="Actin/actin-like_CS"/>
</dbReference>
<dbReference type="InterPro" id="IPR004001">
    <property type="entry name" value="Actin_CS"/>
</dbReference>
<dbReference type="InterPro" id="IPR043129">
    <property type="entry name" value="ATPase_NBD"/>
</dbReference>
<dbReference type="PANTHER" id="PTHR11937">
    <property type="entry name" value="ACTIN"/>
    <property type="match status" value="1"/>
</dbReference>
<dbReference type="Pfam" id="PF00022">
    <property type="entry name" value="Actin"/>
    <property type="match status" value="1"/>
</dbReference>
<dbReference type="PRINTS" id="PR00190">
    <property type="entry name" value="ACTIN"/>
</dbReference>
<dbReference type="SMART" id="SM00268">
    <property type="entry name" value="ACTIN"/>
    <property type="match status" value="1"/>
</dbReference>
<dbReference type="SUPFAM" id="SSF53067">
    <property type="entry name" value="Actin-like ATPase domain"/>
    <property type="match status" value="2"/>
</dbReference>
<dbReference type="PROSITE" id="PS00406">
    <property type="entry name" value="ACTINS_1"/>
    <property type="match status" value="1"/>
</dbReference>
<dbReference type="PROSITE" id="PS00432">
    <property type="entry name" value="ACTINS_2"/>
    <property type="match status" value="1"/>
</dbReference>
<dbReference type="PROSITE" id="PS01132">
    <property type="entry name" value="ACTINS_ACT_LIKE"/>
    <property type="match status" value="1"/>
</dbReference>
<keyword id="KW-0007">Acetylation</keyword>
<keyword id="KW-0067">ATP-binding</keyword>
<keyword id="KW-0963">Cytoplasm</keyword>
<keyword id="KW-0206">Cytoskeleton</keyword>
<keyword id="KW-0378">Hydrolase</keyword>
<keyword id="KW-0488">Methylation</keyword>
<keyword id="KW-0547">Nucleotide-binding</keyword>
<keyword id="KW-0539">Nucleus</keyword>
<keyword id="KW-0558">Oxidation</keyword>
<keyword id="KW-1185">Reference proteome</keyword>
<organism>
    <name type="scientific">Takifugu rubripes</name>
    <name type="common">Japanese pufferfish</name>
    <name type="synonym">Fugu rubripes</name>
    <dbReference type="NCBI Taxonomy" id="31033"/>
    <lineage>
        <taxon>Eukaryota</taxon>
        <taxon>Metazoa</taxon>
        <taxon>Chordata</taxon>
        <taxon>Craniata</taxon>
        <taxon>Vertebrata</taxon>
        <taxon>Euteleostomi</taxon>
        <taxon>Actinopterygii</taxon>
        <taxon>Neopterygii</taxon>
        <taxon>Teleostei</taxon>
        <taxon>Neoteleostei</taxon>
        <taxon>Acanthomorphata</taxon>
        <taxon>Eupercaria</taxon>
        <taxon>Tetraodontiformes</taxon>
        <taxon>Tetradontoidea</taxon>
        <taxon>Tetraodontidae</taxon>
        <taxon>Takifugu</taxon>
    </lineage>
</organism>
<protein>
    <recommendedName>
        <fullName>Actin, cytoplasmic 3</fullName>
        <ecNumber evidence="5">3.6.4.-</ecNumber>
    </recommendedName>
    <alternativeName>
        <fullName>Beta-actin C</fullName>
    </alternativeName>
    <component>
        <recommendedName>
            <fullName>Actin, cytoplasmic 3, N-terminally processed</fullName>
        </recommendedName>
    </component>
</protein>